<dbReference type="EC" id="3.1.26.4" evidence="1"/>
<dbReference type="EMBL" id="CP001657">
    <property type="protein sequence ID" value="ACT12005.1"/>
    <property type="molecule type" value="Genomic_DNA"/>
</dbReference>
<dbReference type="RefSeq" id="WP_012773643.1">
    <property type="nucleotide sequence ID" value="NC_012917.1"/>
</dbReference>
<dbReference type="SMR" id="C6DAJ7"/>
<dbReference type="STRING" id="561230.PC1_0955"/>
<dbReference type="GeneID" id="67795268"/>
<dbReference type="KEGG" id="pct:PC1_0955"/>
<dbReference type="eggNOG" id="COG0164">
    <property type="taxonomic scope" value="Bacteria"/>
</dbReference>
<dbReference type="HOGENOM" id="CLU_036532_3_2_6"/>
<dbReference type="OrthoDB" id="9803420at2"/>
<dbReference type="Proteomes" id="UP000002736">
    <property type="component" value="Chromosome"/>
</dbReference>
<dbReference type="GO" id="GO:0005737">
    <property type="term" value="C:cytoplasm"/>
    <property type="evidence" value="ECO:0007669"/>
    <property type="project" value="UniProtKB-SubCell"/>
</dbReference>
<dbReference type="GO" id="GO:0032299">
    <property type="term" value="C:ribonuclease H2 complex"/>
    <property type="evidence" value="ECO:0007669"/>
    <property type="project" value="TreeGrafter"/>
</dbReference>
<dbReference type="GO" id="GO:0030145">
    <property type="term" value="F:manganese ion binding"/>
    <property type="evidence" value="ECO:0007669"/>
    <property type="project" value="UniProtKB-UniRule"/>
</dbReference>
<dbReference type="GO" id="GO:0003723">
    <property type="term" value="F:RNA binding"/>
    <property type="evidence" value="ECO:0007669"/>
    <property type="project" value="InterPro"/>
</dbReference>
<dbReference type="GO" id="GO:0004523">
    <property type="term" value="F:RNA-DNA hybrid ribonuclease activity"/>
    <property type="evidence" value="ECO:0007669"/>
    <property type="project" value="UniProtKB-UniRule"/>
</dbReference>
<dbReference type="GO" id="GO:0043137">
    <property type="term" value="P:DNA replication, removal of RNA primer"/>
    <property type="evidence" value="ECO:0007669"/>
    <property type="project" value="TreeGrafter"/>
</dbReference>
<dbReference type="GO" id="GO:0006298">
    <property type="term" value="P:mismatch repair"/>
    <property type="evidence" value="ECO:0007669"/>
    <property type="project" value="TreeGrafter"/>
</dbReference>
<dbReference type="CDD" id="cd07182">
    <property type="entry name" value="RNase_HII_bacteria_HII_like"/>
    <property type="match status" value="1"/>
</dbReference>
<dbReference type="FunFam" id="3.30.420.10:FF:000006">
    <property type="entry name" value="Ribonuclease HII"/>
    <property type="match status" value="1"/>
</dbReference>
<dbReference type="Gene3D" id="3.30.420.10">
    <property type="entry name" value="Ribonuclease H-like superfamily/Ribonuclease H"/>
    <property type="match status" value="1"/>
</dbReference>
<dbReference type="HAMAP" id="MF_00052_B">
    <property type="entry name" value="RNase_HII_B"/>
    <property type="match status" value="1"/>
</dbReference>
<dbReference type="InterPro" id="IPR022898">
    <property type="entry name" value="RNase_HII"/>
</dbReference>
<dbReference type="InterPro" id="IPR001352">
    <property type="entry name" value="RNase_HII/HIII"/>
</dbReference>
<dbReference type="InterPro" id="IPR024567">
    <property type="entry name" value="RNase_HII/HIII_dom"/>
</dbReference>
<dbReference type="InterPro" id="IPR012337">
    <property type="entry name" value="RNaseH-like_sf"/>
</dbReference>
<dbReference type="InterPro" id="IPR036397">
    <property type="entry name" value="RNaseH_sf"/>
</dbReference>
<dbReference type="NCBIfam" id="NF000594">
    <property type="entry name" value="PRK00015.1-1"/>
    <property type="match status" value="1"/>
</dbReference>
<dbReference type="NCBIfam" id="NF000595">
    <property type="entry name" value="PRK00015.1-3"/>
    <property type="match status" value="1"/>
</dbReference>
<dbReference type="NCBIfam" id="NF000596">
    <property type="entry name" value="PRK00015.1-4"/>
    <property type="match status" value="1"/>
</dbReference>
<dbReference type="PANTHER" id="PTHR10954">
    <property type="entry name" value="RIBONUCLEASE H2 SUBUNIT A"/>
    <property type="match status" value="1"/>
</dbReference>
<dbReference type="PANTHER" id="PTHR10954:SF18">
    <property type="entry name" value="RIBONUCLEASE HII"/>
    <property type="match status" value="1"/>
</dbReference>
<dbReference type="Pfam" id="PF01351">
    <property type="entry name" value="RNase_HII"/>
    <property type="match status" value="1"/>
</dbReference>
<dbReference type="SUPFAM" id="SSF53098">
    <property type="entry name" value="Ribonuclease H-like"/>
    <property type="match status" value="1"/>
</dbReference>
<dbReference type="PROSITE" id="PS51975">
    <property type="entry name" value="RNASE_H_2"/>
    <property type="match status" value="1"/>
</dbReference>
<protein>
    <recommendedName>
        <fullName evidence="1">Ribonuclease HII</fullName>
        <shortName evidence="1">RNase HII</shortName>
        <ecNumber evidence="1">3.1.26.4</ecNumber>
    </recommendedName>
</protein>
<reference key="1">
    <citation type="submission" date="2009-07" db="EMBL/GenBank/DDBJ databases">
        <title>Complete sequence of Pectobacterium carotovorum subsp. carotovorum PC1.</title>
        <authorList>
            <consortium name="US DOE Joint Genome Institute"/>
            <person name="Lucas S."/>
            <person name="Copeland A."/>
            <person name="Lapidus A."/>
            <person name="Glavina del Rio T."/>
            <person name="Tice H."/>
            <person name="Bruce D."/>
            <person name="Goodwin L."/>
            <person name="Pitluck S."/>
            <person name="Munk A.C."/>
            <person name="Brettin T."/>
            <person name="Detter J.C."/>
            <person name="Han C."/>
            <person name="Tapia R."/>
            <person name="Larimer F."/>
            <person name="Land M."/>
            <person name="Hauser L."/>
            <person name="Kyrpides N."/>
            <person name="Mikhailova N."/>
            <person name="Balakrishnan V."/>
            <person name="Glasner J."/>
            <person name="Perna N.T."/>
        </authorList>
    </citation>
    <scope>NUCLEOTIDE SEQUENCE [LARGE SCALE GENOMIC DNA]</scope>
    <source>
        <strain>PC1</strain>
    </source>
</reference>
<comment type="function">
    <text evidence="1">Endonuclease that specifically degrades the RNA of RNA-DNA hybrids.</text>
</comment>
<comment type="catalytic activity">
    <reaction evidence="1">
        <text>Endonucleolytic cleavage to 5'-phosphomonoester.</text>
        <dbReference type="EC" id="3.1.26.4"/>
    </reaction>
</comment>
<comment type="cofactor">
    <cofactor evidence="1">
        <name>Mn(2+)</name>
        <dbReference type="ChEBI" id="CHEBI:29035"/>
    </cofactor>
    <cofactor evidence="1">
        <name>Mg(2+)</name>
        <dbReference type="ChEBI" id="CHEBI:18420"/>
    </cofactor>
    <text evidence="1">Manganese or magnesium. Binds 1 divalent metal ion per monomer in the absence of substrate. May bind a second metal ion after substrate binding.</text>
</comment>
<comment type="subcellular location">
    <subcellularLocation>
        <location evidence="1">Cytoplasm</location>
    </subcellularLocation>
</comment>
<comment type="similarity">
    <text evidence="1">Belongs to the RNase HII family.</text>
</comment>
<evidence type="ECO:0000255" key="1">
    <source>
        <dbReference type="HAMAP-Rule" id="MF_00052"/>
    </source>
</evidence>
<evidence type="ECO:0000255" key="2">
    <source>
        <dbReference type="PROSITE-ProRule" id="PRU01319"/>
    </source>
</evidence>
<name>RNH2_PECCP</name>
<gene>
    <name evidence="1" type="primary">rnhB</name>
    <name type="ordered locus">PC1_0955</name>
</gene>
<feature type="chain" id="PRO_1000202289" description="Ribonuclease HII">
    <location>
        <begin position="1"/>
        <end position="198"/>
    </location>
</feature>
<feature type="domain" description="RNase H type-2" evidence="2">
    <location>
        <begin position="11"/>
        <end position="198"/>
    </location>
</feature>
<feature type="binding site" evidence="1">
    <location>
        <position position="17"/>
    </location>
    <ligand>
        <name>a divalent metal cation</name>
        <dbReference type="ChEBI" id="CHEBI:60240"/>
    </ligand>
</feature>
<feature type="binding site" evidence="1">
    <location>
        <position position="18"/>
    </location>
    <ligand>
        <name>a divalent metal cation</name>
        <dbReference type="ChEBI" id="CHEBI:60240"/>
    </ligand>
</feature>
<feature type="binding site" evidence="1">
    <location>
        <position position="109"/>
    </location>
    <ligand>
        <name>a divalent metal cation</name>
        <dbReference type="ChEBI" id="CHEBI:60240"/>
    </ligand>
</feature>
<organism>
    <name type="scientific">Pectobacterium carotovorum subsp. carotovorum (strain PC1)</name>
    <dbReference type="NCBI Taxonomy" id="561230"/>
    <lineage>
        <taxon>Bacteria</taxon>
        <taxon>Pseudomonadati</taxon>
        <taxon>Pseudomonadota</taxon>
        <taxon>Gammaproteobacteria</taxon>
        <taxon>Enterobacterales</taxon>
        <taxon>Pectobacteriaceae</taxon>
        <taxon>Pectobacterium</taxon>
    </lineage>
</organism>
<proteinExistence type="inferred from homology"/>
<accession>C6DAJ7</accession>
<sequence>MSEIFIYPQATCIAGVDEVGRGPLVGAVVTAAVILDPTRPIVGLADSKQLSEKRRLALYDEIKEKALAWSLGRAEPEEIDQLNILHATMLAMQRAVAGLAVVPDFVLIDGNRCPALPMPSQAVVKGDSRVAEISAASIMAKVTRDREMVELDERFPAYGFAQHKGYPTAFHLEKLAALGATEFHRRSFAPVKRALGLA</sequence>
<keyword id="KW-0963">Cytoplasm</keyword>
<keyword id="KW-0255">Endonuclease</keyword>
<keyword id="KW-0378">Hydrolase</keyword>
<keyword id="KW-0464">Manganese</keyword>
<keyword id="KW-0479">Metal-binding</keyword>
<keyword id="KW-0540">Nuclease</keyword>